<feature type="chain" id="PRO_0000239173" description="Putative DEAD-box ATP-dependent RNA helicase 33">
    <location>
        <begin position="1"/>
        <end position="845"/>
    </location>
</feature>
<feature type="domain" description="Helicase ATP-binding" evidence="1">
    <location>
        <begin position="406"/>
        <end position="590"/>
    </location>
</feature>
<feature type="domain" description="Helicase C-terminal" evidence="2">
    <location>
        <begin position="624"/>
        <end position="778"/>
    </location>
</feature>
<feature type="region of interest" description="Disordered" evidence="3">
    <location>
        <begin position="129"/>
        <end position="149"/>
    </location>
</feature>
<feature type="region of interest" description="Disordered" evidence="3">
    <location>
        <begin position="282"/>
        <end position="302"/>
    </location>
</feature>
<feature type="short sequence motif" description="Q motif">
    <location>
        <begin position="375"/>
        <end position="403"/>
    </location>
</feature>
<feature type="short sequence motif" description="DEAD box">
    <location>
        <begin position="538"/>
        <end position="541"/>
    </location>
</feature>
<feature type="compositionally biased region" description="Acidic residues" evidence="3">
    <location>
        <begin position="289"/>
        <end position="298"/>
    </location>
</feature>
<feature type="binding site" evidence="1">
    <location>
        <begin position="419"/>
        <end position="426"/>
    </location>
    <ligand>
        <name>ATP</name>
        <dbReference type="ChEBI" id="CHEBI:30616"/>
    </ligand>
</feature>
<sequence>MAMAMRLPAISRAVTEVASSPVGLRRLFCSNASRFSFLSPPARRQAEPSTNLFHSGLSKRITSERSLWNRIFSRNMGGGPRTFPGGLNKWQWKRMHEKKAREKENKLLDQEKQLYEARIRTEIRAKMWGHPDSGEKTAKLKQSHGPMSPKEHIKTLADRFMKAGADDLWNDNDGPVKKFDQGSRSCSDSIDSTPIDVRRLVSATCDSMGKHRVLDSSRRGFSSMSRFKRNESSCDEGDDVDAKKLDTLSPFSPKFSGTKEKVKSSTSVVGVIRNKGLFGRRKFRKNDSSTEEDSDEEGNEGKMIGWMDLRKTGSSASLGNHDIKLTKRVNRNVTDEELYPPLDINRVREDLSKKQSVDNVMEEKQEPHDSIYSAKRFDESCISPLTLKALSASGIVKMTRVQDATLSECLDGKDALVKAKTGTGKSMAFLLPAIETVLKAMNSGKGVHKVAPIFVLILCPTRELASQIAAEGKALLKNHDGIGVQTLIGGTRFRLDQQRLESEPCQILIATPGRLLDHIENKSGLTSRLMALKLFIVDEADLLLDLGFKRDVEKIIDCLPRQRQSLLFSATIPKEVRRVSQLVLKRDHSYIDTIGLGCVETHDKVKQSCIVAPHESHFHLVPHLLKEHINNMPDYKIIVFCSTGMVTSLMYTLLREMKLNVREIHARKPQLHRTCVSDEFKESNRLILVTSDVSARGMNYPDVTLVIQVGIPSDREQYIHRLGRTGREGKGGKGLLLIAPWERYFLDELKDLPLEPIPAPDLDSRVKHQVDQSMAKIDTSIKEAAYHAWLGYYNSVRETGRDKTTLAELANRFCHSIGLEKPPALFRRTAVKMGLKGISGIPIRK</sequence>
<evidence type="ECO:0000255" key="1">
    <source>
        <dbReference type="PROSITE-ProRule" id="PRU00541"/>
    </source>
</evidence>
<evidence type="ECO:0000255" key="2">
    <source>
        <dbReference type="PROSITE-ProRule" id="PRU00542"/>
    </source>
</evidence>
<evidence type="ECO:0000256" key="3">
    <source>
        <dbReference type="SAM" id="MobiDB-lite"/>
    </source>
</evidence>
<evidence type="ECO:0000305" key="4"/>
<dbReference type="EC" id="3.6.4.13"/>
<dbReference type="EMBL" id="AC004483">
    <property type="protein sequence ID" value="AAC26676.1"/>
    <property type="molecule type" value="Genomic_DNA"/>
</dbReference>
<dbReference type="EMBL" id="CP002685">
    <property type="protein sequence ID" value="AEC06130.1"/>
    <property type="molecule type" value="Genomic_DNA"/>
</dbReference>
<dbReference type="PIR" id="E84488">
    <property type="entry name" value="E84488"/>
</dbReference>
<dbReference type="RefSeq" id="NP_178818.1">
    <property type="nucleotide sequence ID" value="NM_126777.1"/>
</dbReference>
<dbReference type="SMR" id="O80792"/>
<dbReference type="BioGRID" id="811">
    <property type="interactions" value="1"/>
</dbReference>
<dbReference type="FunCoup" id="O80792">
    <property type="interactions" value="101"/>
</dbReference>
<dbReference type="STRING" id="3702.O80792"/>
<dbReference type="iPTMnet" id="O80792"/>
<dbReference type="PaxDb" id="3702-AT2G07750.1"/>
<dbReference type="EnsemblPlants" id="AT2G07750.1">
    <property type="protein sequence ID" value="AT2G07750.1"/>
    <property type="gene ID" value="AT2G07750"/>
</dbReference>
<dbReference type="GeneID" id="815422"/>
<dbReference type="Gramene" id="AT2G07750.1">
    <property type="protein sequence ID" value="AT2G07750.1"/>
    <property type="gene ID" value="AT2G07750"/>
</dbReference>
<dbReference type="KEGG" id="ath:AT2G07750"/>
<dbReference type="Araport" id="AT2G07750"/>
<dbReference type="TAIR" id="AT2G07750"/>
<dbReference type="eggNOG" id="KOG0342">
    <property type="taxonomic scope" value="Eukaryota"/>
</dbReference>
<dbReference type="HOGENOM" id="CLU_003041_26_6_1"/>
<dbReference type="InParanoid" id="O80792"/>
<dbReference type="OMA" id="QQMRGFC"/>
<dbReference type="PhylomeDB" id="O80792"/>
<dbReference type="PRO" id="PR:O80792"/>
<dbReference type="Proteomes" id="UP000006548">
    <property type="component" value="Chromosome 2"/>
</dbReference>
<dbReference type="ExpressionAtlas" id="O80792">
    <property type="expression patterns" value="baseline and differential"/>
</dbReference>
<dbReference type="GO" id="GO:0005524">
    <property type="term" value="F:ATP binding"/>
    <property type="evidence" value="ECO:0007669"/>
    <property type="project" value="UniProtKB-KW"/>
</dbReference>
<dbReference type="GO" id="GO:0016887">
    <property type="term" value="F:ATP hydrolysis activity"/>
    <property type="evidence" value="ECO:0007669"/>
    <property type="project" value="RHEA"/>
</dbReference>
<dbReference type="GO" id="GO:0003723">
    <property type="term" value="F:RNA binding"/>
    <property type="evidence" value="ECO:0007669"/>
    <property type="project" value="UniProtKB-KW"/>
</dbReference>
<dbReference type="GO" id="GO:0003724">
    <property type="term" value="F:RNA helicase activity"/>
    <property type="evidence" value="ECO:0007669"/>
    <property type="project" value="UniProtKB-EC"/>
</dbReference>
<dbReference type="CDD" id="cd18787">
    <property type="entry name" value="SF2_C_DEAD"/>
    <property type="match status" value="1"/>
</dbReference>
<dbReference type="Gene3D" id="3.40.50.300">
    <property type="entry name" value="P-loop containing nucleotide triphosphate hydrolases"/>
    <property type="match status" value="2"/>
</dbReference>
<dbReference type="InterPro" id="IPR011545">
    <property type="entry name" value="DEAD/DEAH_box_helicase_dom"/>
</dbReference>
<dbReference type="InterPro" id="IPR014001">
    <property type="entry name" value="Helicase_ATP-bd"/>
</dbReference>
<dbReference type="InterPro" id="IPR001650">
    <property type="entry name" value="Helicase_C-like"/>
</dbReference>
<dbReference type="InterPro" id="IPR027417">
    <property type="entry name" value="P-loop_NTPase"/>
</dbReference>
<dbReference type="InterPro" id="IPR014014">
    <property type="entry name" value="RNA_helicase_DEAD_Q_motif"/>
</dbReference>
<dbReference type="PANTHER" id="PTHR24031">
    <property type="entry name" value="RNA HELICASE"/>
    <property type="match status" value="1"/>
</dbReference>
<dbReference type="Pfam" id="PF00270">
    <property type="entry name" value="DEAD"/>
    <property type="match status" value="1"/>
</dbReference>
<dbReference type="Pfam" id="PF00271">
    <property type="entry name" value="Helicase_C"/>
    <property type="match status" value="1"/>
</dbReference>
<dbReference type="SMART" id="SM00487">
    <property type="entry name" value="DEXDc"/>
    <property type="match status" value="1"/>
</dbReference>
<dbReference type="SMART" id="SM00490">
    <property type="entry name" value="HELICc"/>
    <property type="match status" value="1"/>
</dbReference>
<dbReference type="SUPFAM" id="SSF52540">
    <property type="entry name" value="P-loop containing nucleoside triphosphate hydrolases"/>
    <property type="match status" value="2"/>
</dbReference>
<dbReference type="PROSITE" id="PS51192">
    <property type="entry name" value="HELICASE_ATP_BIND_1"/>
    <property type="match status" value="1"/>
</dbReference>
<dbReference type="PROSITE" id="PS51194">
    <property type="entry name" value="HELICASE_CTER"/>
    <property type="match status" value="1"/>
</dbReference>
<dbReference type="PROSITE" id="PS51195">
    <property type="entry name" value="Q_MOTIF"/>
    <property type="match status" value="1"/>
</dbReference>
<gene>
    <name type="primary">RH33</name>
    <name type="ordered locus">At2g07750</name>
    <name type="ORF">T12J2.7</name>
</gene>
<accession>O80792</accession>
<proteinExistence type="inferred from homology"/>
<name>RH33_ARATH</name>
<keyword id="KW-0067">ATP-binding</keyword>
<keyword id="KW-0347">Helicase</keyword>
<keyword id="KW-0378">Hydrolase</keyword>
<keyword id="KW-0547">Nucleotide-binding</keyword>
<keyword id="KW-1185">Reference proteome</keyword>
<keyword id="KW-0694">RNA-binding</keyword>
<reference key="1">
    <citation type="journal article" date="1999" name="Nature">
        <title>Sequence and analysis of chromosome 2 of the plant Arabidopsis thaliana.</title>
        <authorList>
            <person name="Lin X."/>
            <person name="Kaul S."/>
            <person name="Rounsley S.D."/>
            <person name="Shea T.P."/>
            <person name="Benito M.-I."/>
            <person name="Town C.D."/>
            <person name="Fujii C.Y."/>
            <person name="Mason T.M."/>
            <person name="Bowman C.L."/>
            <person name="Barnstead M.E."/>
            <person name="Feldblyum T.V."/>
            <person name="Buell C.R."/>
            <person name="Ketchum K.A."/>
            <person name="Lee J.J."/>
            <person name="Ronning C.M."/>
            <person name="Koo H.L."/>
            <person name="Moffat K.S."/>
            <person name="Cronin L.A."/>
            <person name="Shen M."/>
            <person name="Pai G."/>
            <person name="Van Aken S."/>
            <person name="Umayam L."/>
            <person name="Tallon L.J."/>
            <person name="Gill J.E."/>
            <person name="Adams M.D."/>
            <person name="Carrera A.J."/>
            <person name="Creasy T.H."/>
            <person name="Goodman H.M."/>
            <person name="Somerville C.R."/>
            <person name="Copenhaver G.P."/>
            <person name="Preuss D."/>
            <person name="Nierman W.C."/>
            <person name="White O."/>
            <person name="Eisen J.A."/>
            <person name="Salzberg S.L."/>
            <person name="Fraser C.M."/>
            <person name="Venter J.C."/>
        </authorList>
    </citation>
    <scope>NUCLEOTIDE SEQUENCE [LARGE SCALE GENOMIC DNA]</scope>
    <source>
        <strain>cv. Columbia</strain>
    </source>
</reference>
<reference key="2">
    <citation type="journal article" date="2017" name="Plant J.">
        <title>Araport11: a complete reannotation of the Arabidopsis thaliana reference genome.</title>
        <authorList>
            <person name="Cheng C.Y."/>
            <person name="Krishnakumar V."/>
            <person name="Chan A.P."/>
            <person name="Thibaud-Nissen F."/>
            <person name="Schobel S."/>
            <person name="Town C.D."/>
        </authorList>
    </citation>
    <scope>GENOME REANNOTATION</scope>
    <source>
        <strain>cv. Columbia</strain>
    </source>
</reference>
<reference key="3">
    <citation type="journal article" date="2004" name="Plant Biotechnol. J.">
        <title>DEAD-box RNA helicases in Arabidopsis thaliana: establishing a link between quantitative expression, gene structure and evolution of a family of genes.</title>
        <authorList>
            <person name="Mingam A."/>
            <person name="Toffano-Nioche C."/>
            <person name="Brunaud V."/>
            <person name="Boudet N."/>
            <person name="Kreis M."/>
            <person name="Lecharny A."/>
        </authorList>
    </citation>
    <scope>GENE FAMILY</scope>
    <scope>NOMENCLATURE</scope>
</reference>
<reference key="4">
    <citation type="journal article" date="2013" name="PLoS ONE">
        <title>Genome-wide comparative in silico analysis of the RNA helicase gene family in Zea mays and Glycine max: a comparison with Arabidopsis and Oryza sativa.</title>
        <authorList>
            <person name="Xu R."/>
            <person name="Zhang S."/>
            <person name="Huang J."/>
            <person name="Zheng C."/>
        </authorList>
    </citation>
    <scope>GENE FAMILY</scope>
</reference>
<organism>
    <name type="scientific">Arabidopsis thaliana</name>
    <name type="common">Mouse-ear cress</name>
    <dbReference type="NCBI Taxonomy" id="3702"/>
    <lineage>
        <taxon>Eukaryota</taxon>
        <taxon>Viridiplantae</taxon>
        <taxon>Streptophyta</taxon>
        <taxon>Embryophyta</taxon>
        <taxon>Tracheophyta</taxon>
        <taxon>Spermatophyta</taxon>
        <taxon>Magnoliopsida</taxon>
        <taxon>eudicotyledons</taxon>
        <taxon>Gunneridae</taxon>
        <taxon>Pentapetalae</taxon>
        <taxon>rosids</taxon>
        <taxon>malvids</taxon>
        <taxon>Brassicales</taxon>
        <taxon>Brassicaceae</taxon>
        <taxon>Camelineae</taxon>
        <taxon>Arabidopsis</taxon>
    </lineage>
</organism>
<comment type="catalytic activity">
    <reaction>
        <text>ATP + H2O = ADP + phosphate + H(+)</text>
        <dbReference type="Rhea" id="RHEA:13065"/>
        <dbReference type="ChEBI" id="CHEBI:15377"/>
        <dbReference type="ChEBI" id="CHEBI:15378"/>
        <dbReference type="ChEBI" id="CHEBI:30616"/>
        <dbReference type="ChEBI" id="CHEBI:43474"/>
        <dbReference type="ChEBI" id="CHEBI:456216"/>
        <dbReference type="EC" id="3.6.4.13"/>
    </reaction>
</comment>
<comment type="domain">
    <text>The Q motif is unique to and characteristic of the DEAD box family of RNA helicases and controls ATP binding and hydrolysis.</text>
</comment>
<comment type="similarity">
    <text evidence="4">Belongs to the DEAD box helicase family.</text>
</comment>
<protein>
    <recommendedName>
        <fullName>Putative DEAD-box ATP-dependent RNA helicase 33</fullName>
        <ecNumber>3.6.4.13</ecNumber>
    </recommendedName>
</protein>